<dbReference type="EMBL" id="L14009">
    <property type="protein sequence ID" value="AAA16473.1"/>
    <property type="molecule type" value="mRNA"/>
</dbReference>
<dbReference type="EMBL" id="AE014134">
    <property type="protein sequence ID" value="AAF53399.1"/>
    <property type="molecule type" value="Genomic_DNA"/>
</dbReference>
<dbReference type="EMBL" id="AY070550">
    <property type="protein sequence ID" value="AAL48021.1"/>
    <property type="molecule type" value="mRNA"/>
</dbReference>
<dbReference type="PIR" id="A55929">
    <property type="entry name" value="A55929"/>
</dbReference>
<dbReference type="RefSeq" id="NP_001285932.1">
    <property type="nucleotide sequence ID" value="NM_001299003.1"/>
</dbReference>
<dbReference type="RefSeq" id="NP_476917.1">
    <property type="nucleotide sequence ID" value="NM_057569.3"/>
</dbReference>
<dbReference type="BioGRID" id="60871">
    <property type="interactions" value="21"/>
</dbReference>
<dbReference type="DIP" id="DIP-19280N"/>
<dbReference type="FunCoup" id="Q24423">
    <property type="interactions" value="481"/>
</dbReference>
<dbReference type="IntAct" id="Q24423">
    <property type="interactions" value="4"/>
</dbReference>
<dbReference type="STRING" id="7227.FBpp0080215"/>
<dbReference type="GlyGen" id="Q24423">
    <property type="glycosylation" value="1 site"/>
</dbReference>
<dbReference type="iPTMnet" id="Q24423"/>
<dbReference type="PaxDb" id="7227-FBpp0080215"/>
<dbReference type="DNASU" id="34847"/>
<dbReference type="EnsemblMetazoa" id="FBtr0080643">
    <property type="protein sequence ID" value="FBpp0080215"/>
    <property type="gene ID" value="FBgn0005771"/>
</dbReference>
<dbReference type="EnsemblMetazoa" id="FBtr0342913">
    <property type="protein sequence ID" value="FBpp0309705"/>
    <property type="gene ID" value="FBgn0005771"/>
</dbReference>
<dbReference type="GeneID" id="34847"/>
<dbReference type="KEGG" id="dme:Dmel_CG4491"/>
<dbReference type="AGR" id="FB:FBgn0005771"/>
<dbReference type="CTD" id="34847"/>
<dbReference type="FlyBase" id="FBgn0005771">
    <property type="gene designation" value="noc"/>
</dbReference>
<dbReference type="VEuPathDB" id="VectorBase:FBgn0005771"/>
<dbReference type="eggNOG" id="ENOG502QUYV">
    <property type="taxonomic scope" value="Eukaryota"/>
</dbReference>
<dbReference type="HOGENOM" id="CLU_035082_0_0_1"/>
<dbReference type="InParanoid" id="Q24423"/>
<dbReference type="OMA" id="LMYPSPH"/>
<dbReference type="OrthoDB" id="10054079at2759"/>
<dbReference type="PhylomeDB" id="Q24423"/>
<dbReference type="Reactome" id="R-DME-212436">
    <property type="pathway name" value="Generic Transcription Pathway"/>
</dbReference>
<dbReference type="SignaLink" id="Q24423"/>
<dbReference type="BioGRID-ORCS" id="34847">
    <property type="hits" value="0 hits in 3 CRISPR screens"/>
</dbReference>
<dbReference type="GenomeRNAi" id="34847"/>
<dbReference type="PRO" id="PR:Q24423"/>
<dbReference type="Proteomes" id="UP000000803">
    <property type="component" value="Chromosome 2L"/>
</dbReference>
<dbReference type="Bgee" id="FBgn0005771">
    <property type="expression patterns" value="Expressed in wing disc and 268 other cell types or tissues"/>
</dbReference>
<dbReference type="ExpressionAtlas" id="Q24423">
    <property type="expression patterns" value="baseline and differential"/>
</dbReference>
<dbReference type="GO" id="GO:0005634">
    <property type="term" value="C:nucleus"/>
    <property type="evidence" value="ECO:0000318"/>
    <property type="project" value="GO_Central"/>
</dbReference>
<dbReference type="GO" id="GO:0003677">
    <property type="term" value="F:DNA binding"/>
    <property type="evidence" value="ECO:0007669"/>
    <property type="project" value="UniProtKB-KW"/>
</dbReference>
<dbReference type="GO" id="GO:0008270">
    <property type="term" value="F:zinc ion binding"/>
    <property type="evidence" value="ECO:0007669"/>
    <property type="project" value="UniProtKB-KW"/>
</dbReference>
<dbReference type="GO" id="GO:0007420">
    <property type="term" value="P:brain development"/>
    <property type="evidence" value="ECO:0000315"/>
    <property type="project" value="UniProtKB"/>
</dbReference>
<dbReference type="GO" id="GO:0001752">
    <property type="term" value="P:compound eye photoreceptor fate commitment"/>
    <property type="evidence" value="ECO:0000316"/>
    <property type="project" value="FlyBase"/>
</dbReference>
<dbReference type="GO" id="GO:0035214">
    <property type="term" value="P:eye-antennal disc development"/>
    <property type="evidence" value="ECO:0000316"/>
    <property type="project" value="FlyBase"/>
</dbReference>
<dbReference type="GO" id="GO:0035218">
    <property type="term" value="P:leg disc development"/>
    <property type="evidence" value="ECO:0000315"/>
    <property type="project" value="UniProtKB"/>
</dbReference>
<dbReference type="GO" id="GO:0045892">
    <property type="term" value="P:negative regulation of DNA-templated transcription"/>
    <property type="evidence" value="ECO:0000318"/>
    <property type="project" value="GO_Central"/>
</dbReference>
<dbReference type="GO" id="GO:0010629">
    <property type="term" value="P:negative regulation of gene expression"/>
    <property type="evidence" value="ECO:0000315"/>
    <property type="project" value="FlyBase"/>
</dbReference>
<dbReference type="GO" id="GO:0007219">
    <property type="term" value="P:Notch signaling pathway"/>
    <property type="evidence" value="ECO:0007669"/>
    <property type="project" value="UniProtKB-KW"/>
</dbReference>
<dbReference type="GO" id="GO:0008056">
    <property type="term" value="P:ocellus development"/>
    <property type="evidence" value="ECO:0000315"/>
    <property type="project" value="UniProtKB"/>
</dbReference>
<dbReference type="GO" id="GO:0007424">
    <property type="term" value="P:open tracheal system development"/>
    <property type="evidence" value="ECO:0000315"/>
    <property type="project" value="FlyBase"/>
</dbReference>
<dbReference type="GO" id="GO:0007430">
    <property type="term" value="P:terminal branching, open tracheal system"/>
    <property type="evidence" value="ECO:0000315"/>
    <property type="project" value="UniProtKB"/>
</dbReference>
<dbReference type="GO" id="GO:0035220">
    <property type="term" value="P:wing disc development"/>
    <property type="evidence" value="ECO:0000315"/>
    <property type="project" value="UniProtKB"/>
</dbReference>
<dbReference type="Gene3D" id="3.30.160.60">
    <property type="entry name" value="Classic Zinc Finger"/>
    <property type="match status" value="1"/>
</dbReference>
<dbReference type="InterPro" id="IPR051520">
    <property type="entry name" value="Elbow/Noc_ZnFinger"/>
</dbReference>
<dbReference type="InterPro" id="IPR013087">
    <property type="entry name" value="Znf_C2H2_type"/>
</dbReference>
<dbReference type="PANTHER" id="PTHR12522:SF5">
    <property type="entry name" value="ZINC FINGER PROTEIN NOC"/>
    <property type="match status" value="1"/>
</dbReference>
<dbReference type="PANTHER" id="PTHR12522">
    <property type="entry name" value="ZINC-FINGER PROTEIN NOLZ1-RELATED"/>
    <property type="match status" value="1"/>
</dbReference>
<dbReference type="PROSITE" id="PS50157">
    <property type="entry name" value="ZINC_FINGER_C2H2_2"/>
    <property type="match status" value="1"/>
</dbReference>
<gene>
    <name type="primary">noc</name>
    <name type="synonym">nocA</name>
    <name type="ORF">CG4491</name>
</gene>
<sequence length="537" mass="53996">MVVLEGGGGVVTIGNNQYLQPDYLAPLPTTMDAKKSPLALLAQTCSQIGADSSAVKPLLAMDKNKTKPGACSSSSNSSSSSGSAEISAAKSPSGQAKSPKSSTPISSTATSASLSNTSTGEIKLAFKPYETNVLSHQNQNSFKSSSSLDAEPTRPSSKNSSSAQERVPSRSKSNATPTDGGKAEISAHDSSSSRKTVSPSGSSQRGASPIVRSGMEVLNNANGTAQHPKEMSSMAAAAAAAAAAYKAAGPYGLNPLSALCCPPGMEQHANPAFRPPFAGGFSHHHAAMLAVAANGGYPGGAPGGGPAGQPNPYISYQRIKTPAGGEAIVPVCKDPYCQGCPYSAHTQQMLMGAPCPAGCTQCEHQKYGLAMASAAGLPPAHPYSQAAAAAAANAAAARSAPYVCSWVVGDAYCGKRFQTSDELFSHLRTHTGNLSDPAAAAAALAQSQAQSLLGTLFPPSALRAGYPTPPLSPMSAAAAAARYHPYAKPPPGALAGGPSPFGAAGAFNPAAAAAAAALGPYYSPYAMYGQRMGAAHQ</sequence>
<accession>Q24423</accession>
<evidence type="ECO:0000255" key="1">
    <source>
        <dbReference type="PROSITE-ProRule" id="PRU00042"/>
    </source>
</evidence>
<evidence type="ECO:0000256" key="2">
    <source>
        <dbReference type="SAM" id="MobiDB-lite"/>
    </source>
</evidence>
<evidence type="ECO:0000269" key="3">
    <source>
    </source>
</evidence>
<evidence type="ECO:0000269" key="4">
    <source>
    </source>
</evidence>
<evidence type="ECO:0000269" key="5">
    <source>
    </source>
</evidence>
<evidence type="ECO:0000269" key="6">
    <source>
    </source>
</evidence>
<evidence type="ECO:0000269" key="7">
    <source>
    </source>
</evidence>
<evidence type="ECO:0000305" key="8"/>
<name>NOC_DROME</name>
<reference key="1">
    <citation type="journal article" date="1994" name="Mol. Cell. Biol.">
        <title>The Drosophila l(2)35Ba/nocA gene encodes a putative Zn finger protein involved in the development of the embryonic brain and the adult ocellar structures.</title>
        <authorList>
            <person name="Cheah P.Y."/>
            <person name="Meng Y.B."/>
            <person name="Yang X."/>
            <person name="Kimbrell D."/>
            <person name="Ashburner M."/>
            <person name="Chia W."/>
        </authorList>
    </citation>
    <scope>NUCLEOTIDE SEQUENCE [MRNA]</scope>
    <scope>FUNCTION</scope>
    <scope>TISSUE SPECIFICITY</scope>
    <scope>DEVELOPMENTAL STAGE</scope>
</reference>
<reference key="2">
    <citation type="journal article" date="2000" name="Science">
        <title>The genome sequence of Drosophila melanogaster.</title>
        <authorList>
            <person name="Adams M.D."/>
            <person name="Celniker S.E."/>
            <person name="Holt R.A."/>
            <person name="Evans C.A."/>
            <person name="Gocayne J.D."/>
            <person name="Amanatides P.G."/>
            <person name="Scherer S.E."/>
            <person name="Li P.W."/>
            <person name="Hoskins R.A."/>
            <person name="Galle R.F."/>
            <person name="George R.A."/>
            <person name="Lewis S.E."/>
            <person name="Richards S."/>
            <person name="Ashburner M."/>
            <person name="Henderson S.N."/>
            <person name="Sutton G.G."/>
            <person name="Wortman J.R."/>
            <person name="Yandell M.D."/>
            <person name="Zhang Q."/>
            <person name="Chen L.X."/>
            <person name="Brandon R.C."/>
            <person name="Rogers Y.-H.C."/>
            <person name="Blazej R.G."/>
            <person name="Champe M."/>
            <person name="Pfeiffer B.D."/>
            <person name="Wan K.H."/>
            <person name="Doyle C."/>
            <person name="Baxter E.G."/>
            <person name="Helt G."/>
            <person name="Nelson C.R."/>
            <person name="Miklos G.L.G."/>
            <person name="Abril J.F."/>
            <person name="Agbayani A."/>
            <person name="An H.-J."/>
            <person name="Andrews-Pfannkoch C."/>
            <person name="Baldwin D."/>
            <person name="Ballew R.M."/>
            <person name="Basu A."/>
            <person name="Baxendale J."/>
            <person name="Bayraktaroglu L."/>
            <person name="Beasley E.M."/>
            <person name="Beeson K.Y."/>
            <person name="Benos P.V."/>
            <person name="Berman B.P."/>
            <person name="Bhandari D."/>
            <person name="Bolshakov S."/>
            <person name="Borkova D."/>
            <person name="Botchan M.R."/>
            <person name="Bouck J."/>
            <person name="Brokstein P."/>
            <person name="Brottier P."/>
            <person name="Burtis K.C."/>
            <person name="Busam D.A."/>
            <person name="Butler H."/>
            <person name="Cadieu E."/>
            <person name="Center A."/>
            <person name="Chandra I."/>
            <person name="Cherry J.M."/>
            <person name="Cawley S."/>
            <person name="Dahlke C."/>
            <person name="Davenport L.B."/>
            <person name="Davies P."/>
            <person name="de Pablos B."/>
            <person name="Delcher A."/>
            <person name="Deng Z."/>
            <person name="Mays A.D."/>
            <person name="Dew I."/>
            <person name="Dietz S.M."/>
            <person name="Dodson K."/>
            <person name="Doup L.E."/>
            <person name="Downes M."/>
            <person name="Dugan-Rocha S."/>
            <person name="Dunkov B.C."/>
            <person name="Dunn P."/>
            <person name="Durbin K.J."/>
            <person name="Evangelista C.C."/>
            <person name="Ferraz C."/>
            <person name="Ferriera S."/>
            <person name="Fleischmann W."/>
            <person name="Fosler C."/>
            <person name="Gabrielian A.E."/>
            <person name="Garg N.S."/>
            <person name="Gelbart W.M."/>
            <person name="Glasser K."/>
            <person name="Glodek A."/>
            <person name="Gong F."/>
            <person name="Gorrell J.H."/>
            <person name="Gu Z."/>
            <person name="Guan P."/>
            <person name="Harris M."/>
            <person name="Harris N.L."/>
            <person name="Harvey D.A."/>
            <person name="Heiman T.J."/>
            <person name="Hernandez J.R."/>
            <person name="Houck J."/>
            <person name="Hostin D."/>
            <person name="Houston K.A."/>
            <person name="Howland T.J."/>
            <person name="Wei M.-H."/>
            <person name="Ibegwam C."/>
            <person name="Jalali M."/>
            <person name="Kalush F."/>
            <person name="Karpen G.H."/>
            <person name="Ke Z."/>
            <person name="Kennison J.A."/>
            <person name="Ketchum K.A."/>
            <person name="Kimmel B.E."/>
            <person name="Kodira C.D."/>
            <person name="Kraft C.L."/>
            <person name="Kravitz S."/>
            <person name="Kulp D."/>
            <person name="Lai Z."/>
            <person name="Lasko P."/>
            <person name="Lei Y."/>
            <person name="Levitsky A.A."/>
            <person name="Li J.H."/>
            <person name="Li Z."/>
            <person name="Liang Y."/>
            <person name="Lin X."/>
            <person name="Liu X."/>
            <person name="Mattei B."/>
            <person name="McIntosh T.C."/>
            <person name="McLeod M.P."/>
            <person name="McPherson D."/>
            <person name="Merkulov G."/>
            <person name="Milshina N.V."/>
            <person name="Mobarry C."/>
            <person name="Morris J."/>
            <person name="Moshrefi A."/>
            <person name="Mount S.M."/>
            <person name="Moy M."/>
            <person name="Murphy B."/>
            <person name="Murphy L."/>
            <person name="Muzny D.M."/>
            <person name="Nelson D.L."/>
            <person name="Nelson D.R."/>
            <person name="Nelson K.A."/>
            <person name="Nixon K."/>
            <person name="Nusskern D.R."/>
            <person name="Pacleb J.M."/>
            <person name="Palazzolo M."/>
            <person name="Pittman G.S."/>
            <person name="Pan S."/>
            <person name="Pollard J."/>
            <person name="Puri V."/>
            <person name="Reese M.G."/>
            <person name="Reinert K."/>
            <person name="Remington K."/>
            <person name="Saunders R.D.C."/>
            <person name="Scheeler F."/>
            <person name="Shen H."/>
            <person name="Shue B.C."/>
            <person name="Siden-Kiamos I."/>
            <person name="Simpson M."/>
            <person name="Skupski M.P."/>
            <person name="Smith T.J."/>
            <person name="Spier E."/>
            <person name="Spradling A.C."/>
            <person name="Stapleton M."/>
            <person name="Strong R."/>
            <person name="Sun E."/>
            <person name="Svirskas R."/>
            <person name="Tector C."/>
            <person name="Turner R."/>
            <person name="Venter E."/>
            <person name="Wang A.H."/>
            <person name="Wang X."/>
            <person name="Wang Z.-Y."/>
            <person name="Wassarman D.A."/>
            <person name="Weinstock G.M."/>
            <person name="Weissenbach J."/>
            <person name="Williams S.M."/>
            <person name="Woodage T."/>
            <person name="Worley K.C."/>
            <person name="Wu D."/>
            <person name="Yang S."/>
            <person name="Yao Q.A."/>
            <person name="Ye J."/>
            <person name="Yeh R.-F."/>
            <person name="Zaveri J.S."/>
            <person name="Zhan M."/>
            <person name="Zhang G."/>
            <person name="Zhao Q."/>
            <person name="Zheng L."/>
            <person name="Zheng X.H."/>
            <person name="Zhong F.N."/>
            <person name="Zhong W."/>
            <person name="Zhou X."/>
            <person name="Zhu S.C."/>
            <person name="Zhu X."/>
            <person name="Smith H.O."/>
            <person name="Gibbs R.A."/>
            <person name="Myers E.W."/>
            <person name="Rubin G.M."/>
            <person name="Venter J.C."/>
        </authorList>
    </citation>
    <scope>NUCLEOTIDE SEQUENCE [LARGE SCALE GENOMIC DNA]</scope>
    <source>
        <strain>Berkeley</strain>
    </source>
</reference>
<reference key="3">
    <citation type="journal article" date="2002" name="Genome Biol.">
        <title>Annotation of the Drosophila melanogaster euchromatic genome: a systematic review.</title>
        <authorList>
            <person name="Misra S."/>
            <person name="Crosby M.A."/>
            <person name="Mungall C.J."/>
            <person name="Matthews B.B."/>
            <person name="Campbell K.S."/>
            <person name="Hradecky P."/>
            <person name="Huang Y."/>
            <person name="Kaminker J.S."/>
            <person name="Millburn G.H."/>
            <person name="Prochnik S.E."/>
            <person name="Smith C.D."/>
            <person name="Tupy J.L."/>
            <person name="Whitfield E.J."/>
            <person name="Bayraktaroglu L."/>
            <person name="Berman B.P."/>
            <person name="Bettencourt B.R."/>
            <person name="Celniker S.E."/>
            <person name="de Grey A.D.N.J."/>
            <person name="Drysdale R.A."/>
            <person name="Harris N.L."/>
            <person name="Richter J."/>
            <person name="Russo S."/>
            <person name="Schroeder A.J."/>
            <person name="Shu S.Q."/>
            <person name="Stapleton M."/>
            <person name="Yamada C."/>
            <person name="Ashburner M."/>
            <person name="Gelbart W.M."/>
            <person name="Rubin G.M."/>
            <person name="Lewis S.E."/>
        </authorList>
    </citation>
    <scope>GENOME REANNOTATION</scope>
    <source>
        <strain>Berkeley</strain>
    </source>
</reference>
<reference key="4">
    <citation type="journal article" date="2002" name="Genome Biol.">
        <title>A Drosophila full-length cDNA resource.</title>
        <authorList>
            <person name="Stapleton M."/>
            <person name="Carlson J.W."/>
            <person name="Brokstein P."/>
            <person name="Yu C."/>
            <person name="Champe M."/>
            <person name="George R.A."/>
            <person name="Guarin H."/>
            <person name="Kronmiller B."/>
            <person name="Pacleb J.M."/>
            <person name="Park S."/>
            <person name="Wan K.H."/>
            <person name="Rubin G.M."/>
            <person name="Celniker S.E."/>
        </authorList>
    </citation>
    <scope>NUCLEOTIDE SEQUENCE [LARGE SCALE MRNA]</scope>
    <source>
        <strain>Berkeley</strain>
        <tissue>Embryo</tissue>
    </source>
</reference>
<reference key="5">
    <citation type="journal article" date="2002" name="Development">
        <title>Elbow and Noc define a family of zinc finger proteins controlling morphogenesis of specific tracheal branches.</title>
        <authorList>
            <person name="Dorfman R."/>
            <person name="Glazer L."/>
            <person name="Weihe U."/>
            <person name="Wernet M.F."/>
            <person name="Shilo B.-Z."/>
        </authorList>
    </citation>
    <scope>FUNCTION</scope>
    <scope>INTERACTION WITH ELB</scope>
    <scope>DEVELOPMENTAL STAGE</scope>
</reference>
<reference key="6">
    <citation type="journal article" date="2004" name="Development">
        <title>Proximodistal subdivision of Drosophila legs and wings: the elbow-no ocelli gene complex.</title>
        <authorList>
            <person name="Weihe U."/>
            <person name="Dorfman R."/>
            <person name="Wernet M.F."/>
            <person name="Cohen S.M."/>
            <person name="Milan M."/>
        </authorList>
    </citation>
    <scope>FUNCTION</scope>
    <scope>DEVELOPMENTAL STAGE</scope>
</reference>
<reference key="7">
    <citation type="journal article" date="2007" name="Dev. Biol.">
        <title>Growth control in the proliferative region of the Drosophila eye-head primordium: the elbow-noc gene complex.</title>
        <authorList>
            <person name="Luque C.M."/>
            <person name="Milan M."/>
        </authorList>
    </citation>
    <scope>FUNCTION</scope>
    <scope>DEVELOPMENTAL STAGE</scope>
</reference>
<reference key="8">
    <citation type="journal article" date="2008" name="J. Proteome Res.">
        <title>Phosphoproteome analysis of Drosophila melanogaster embryos.</title>
        <authorList>
            <person name="Zhai B."/>
            <person name="Villen J."/>
            <person name="Beausoleil S.A."/>
            <person name="Mintseris J."/>
            <person name="Gygi S.P."/>
        </authorList>
    </citation>
    <scope>PHOSPHORYLATION [LARGE SCALE ANALYSIS] AT SER-98; SER-157 AND SER-208</scope>
    <scope>IDENTIFICATION BY MASS SPECTROMETRY</scope>
    <source>
        <tissue>Embryo</tissue>
    </source>
</reference>
<keyword id="KW-0217">Developmental protein</keyword>
<keyword id="KW-0238">DNA-binding</keyword>
<keyword id="KW-0479">Metal-binding</keyword>
<keyword id="KW-0914">Notch signaling pathway</keyword>
<keyword id="KW-0597">Phosphoprotein</keyword>
<keyword id="KW-1185">Reference proteome</keyword>
<keyword id="KW-0862">Zinc</keyword>
<keyword id="KW-0863">Zinc-finger</keyword>
<feature type="chain" id="PRO_0000292212" description="Zinc finger protein Noc">
    <location>
        <begin position="1"/>
        <end position="537"/>
    </location>
</feature>
<feature type="zinc finger region" description="C2H2-type" evidence="1">
    <location>
        <begin position="402"/>
        <end position="430"/>
    </location>
</feature>
<feature type="region of interest" description="Disordered" evidence="2">
    <location>
        <begin position="64"/>
        <end position="116"/>
    </location>
</feature>
<feature type="region of interest" description="Disordered" evidence="2">
    <location>
        <begin position="138"/>
        <end position="212"/>
    </location>
</feature>
<feature type="compositionally biased region" description="Low complexity" evidence="2">
    <location>
        <begin position="70"/>
        <end position="116"/>
    </location>
</feature>
<feature type="compositionally biased region" description="Polar residues" evidence="2">
    <location>
        <begin position="138"/>
        <end position="177"/>
    </location>
</feature>
<feature type="compositionally biased region" description="Polar residues" evidence="2">
    <location>
        <begin position="188"/>
        <end position="206"/>
    </location>
</feature>
<feature type="modified residue" description="Phosphoserine" evidence="6">
    <location>
        <position position="98"/>
    </location>
</feature>
<feature type="modified residue" description="Phosphoserine" evidence="6">
    <location>
        <position position="157"/>
    </location>
</feature>
<feature type="modified residue" description="Phosphoserine" evidence="6">
    <location>
        <position position="208"/>
    </location>
</feature>
<organism>
    <name type="scientific">Drosophila melanogaster</name>
    <name type="common">Fruit fly</name>
    <dbReference type="NCBI Taxonomy" id="7227"/>
    <lineage>
        <taxon>Eukaryota</taxon>
        <taxon>Metazoa</taxon>
        <taxon>Ecdysozoa</taxon>
        <taxon>Arthropoda</taxon>
        <taxon>Hexapoda</taxon>
        <taxon>Insecta</taxon>
        <taxon>Pterygota</taxon>
        <taxon>Neoptera</taxon>
        <taxon>Endopterygota</taxon>
        <taxon>Diptera</taxon>
        <taxon>Brachycera</taxon>
        <taxon>Muscomorpha</taxon>
        <taxon>Ephydroidea</taxon>
        <taxon>Drosophilidae</taxon>
        <taxon>Drosophila</taxon>
        <taxon>Sophophora</taxon>
    </lineage>
</organism>
<comment type="function">
    <text evidence="3 4 5 7">May negatively regulate Notch-induced cell proliferation in the eye-head primordium. Required for development of the supraesophageal ganglion and ocelli. May act in leg and wing primordia to negatively regulate body-wall specifying genes and thereby promote appendage formation. Plays a role in tracheal development.</text>
</comment>
<comment type="subunit">
    <text evidence="3">Interacts with elB.</text>
</comment>
<comment type="tissue specificity">
    <text evidence="7">Highly expressed in the adult head.</text>
</comment>
<comment type="developmental stage">
    <text evidence="3 4 5 7">Expressed from stage 4 in the embryonic termini and at stage 5/6 in the ectodermal stripes. Expressed in the invaginating tracheal pits at stage 11, and ubiquitously throughout the embryo from stage 13. Expressed in the highly proliferative region of the eye-head primordium. Expressed in the distal regions of leg and wing imaginal discs. Expressed predominantly in embryo and pupae.</text>
</comment>
<comment type="similarity">
    <text evidence="8">Belongs to the Elbow/Noc family.</text>
</comment>
<protein>
    <recommendedName>
        <fullName>Zinc finger protein Noc</fullName>
    </recommendedName>
    <alternativeName>
        <fullName>Zinc finger protein NocA</fullName>
    </alternativeName>
</protein>
<proteinExistence type="evidence at protein level"/>